<name>AATPH_ARATH</name>
<sequence>MVFSKDLPSPATMFSTYASLAGYIMMIKPMIHTIIPRPIQNFVFSYIKSFVGSPQAYLSSKISPDASKLRMTRDPNNKNVNLHLSQGEVVSDVYKGIELKWRYLEGRNKKTTVVGEETEEAIVNWQCFELSFDKKHKDLVVKSYIAYVERKAKVIKEERRIIKMHSYSSYTLRWQSVKFEHPSTFHTMAMTPKLKSSVMEDLDRFIKRKDYYKRVGKAWKRSYFLYGPPGTGKSSLVAAMANYLKFDIYDLQLANVQGDAQLRSLLLATNNSSILLVEDIDCSVDLPTRLQPATTTLGAPKGSTPLTLSGLLNCIDGLWSSCGDERIVIFTTNNKEVLDPALLRPGCMDMHIYLGHCSFEGFKILASNYLGMPHDSDDPHRLYPDIKRLIDG</sequence>
<dbReference type="EC" id="3.6.1.-" evidence="1"/>
<dbReference type="EMBL" id="AB006706">
    <property type="protein sequence ID" value="BAB09574.1"/>
    <property type="status" value="ALT_SEQ"/>
    <property type="molecule type" value="Genomic_DNA"/>
</dbReference>
<dbReference type="EMBL" id="CP002688">
    <property type="protein sequence ID" value="AED92463.1"/>
    <property type="molecule type" value="Genomic_DNA"/>
</dbReference>
<dbReference type="RefSeq" id="NP_197277.1">
    <property type="nucleotide sequence ID" value="NM_121781.1"/>
</dbReference>
<dbReference type="SMR" id="F4KID5"/>
<dbReference type="FunCoup" id="F4KID5">
    <property type="interactions" value="1323"/>
</dbReference>
<dbReference type="STRING" id="3702.F4KID5"/>
<dbReference type="iPTMnet" id="F4KID5"/>
<dbReference type="PaxDb" id="3702-AT5G17750.1"/>
<dbReference type="EnsemblPlants" id="AT5G17750.1">
    <property type="protein sequence ID" value="AT5G17750.1"/>
    <property type="gene ID" value="AT5G17750"/>
</dbReference>
<dbReference type="GeneID" id="831643"/>
<dbReference type="Gramene" id="AT5G17750.1">
    <property type="protein sequence ID" value="AT5G17750.1"/>
    <property type="gene ID" value="AT5G17750"/>
</dbReference>
<dbReference type="KEGG" id="ath:AT5G17750"/>
<dbReference type="Araport" id="AT5G17750"/>
<dbReference type="TAIR" id="AT5G17750"/>
<dbReference type="eggNOG" id="KOG0743">
    <property type="taxonomic scope" value="Eukaryota"/>
</dbReference>
<dbReference type="HOGENOM" id="CLU_010189_0_1_1"/>
<dbReference type="InParanoid" id="F4KID5"/>
<dbReference type="PRO" id="PR:F4KID5"/>
<dbReference type="Proteomes" id="UP000006548">
    <property type="component" value="Chromosome 5"/>
</dbReference>
<dbReference type="ExpressionAtlas" id="F4KID5">
    <property type="expression patterns" value="baseline"/>
</dbReference>
<dbReference type="GO" id="GO:0016020">
    <property type="term" value="C:membrane"/>
    <property type="evidence" value="ECO:0007669"/>
    <property type="project" value="UniProtKB-SubCell"/>
</dbReference>
<dbReference type="GO" id="GO:0005524">
    <property type="term" value="F:ATP binding"/>
    <property type="evidence" value="ECO:0007669"/>
    <property type="project" value="UniProtKB-KW"/>
</dbReference>
<dbReference type="GO" id="GO:0016887">
    <property type="term" value="F:ATP hydrolysis activity"/>
    <property type="evidence" value="ECO:0007669"/>
    <property type="project" value="InterPro"/>
</dbReference>
<dbReference type="GO" id="GO:0006950">
    <property type="term" value="P:response to stress"/>
    <property type="evidence" value="ECO:0007669"/>
    <property type="project" value="UniProtKB-ARBA"/>
</dbReference>
<dbReference type="CDD" id="cd19510">
    <property type="entry name" value="RecA-like_BCS1"/>
    <property type="match status" value="1"/>
</dbReference>
<dbReference type="Gene3D" id="3.40.50.300">
    <property type="entry name" value="P-loop containing nucleotide triphosphate hydrolases"/>
    <property type="match status" value="1"/>
</dbReference>
<dbReference type="InterPro" id="IPR003593">
    <property type="entry name" value="AAA+_ATPase"/>
</dbReference>
<dbReference type="InterPro" id="IPR025753">
    <property type="entry name" value="AAA_N_dom"/>
</dbReference>
<dbReference type="InterPro" id="IPR003959">
    <property type="entry name" value="ATPase_AAA_core"/>
</dbReference>
<dbReference type="InterPro" id="IPR003960">
    <property type="entry name" value="ATPase_AAA_CS"/>
</dbReference>
<dbReference type="InterPro" id="IPR050747">
    <property type="entry name" value="Mitochondrial_chaperone_BCS1"/>
</dbReference>
<dbReference type="InterPro" id="IPR027417">
    <property type="entry name" value="P-loop_NTPase"/>
</dbReference>
<dbReference type="PANTHER" id="PTHR23070">
    <property type="entry name" value="BCS1 AAA-TYPE ATPASE"/>
    <property type="match status" value="1"/>
</dbReference>
<dbReference type="Pfam" id="PF00004">
    <property type="entry name" value="AAA"/>
    <property type="match status" value="1"/>
</dbReference>
<dbReference type="Pfam" id="PF14363">
    <property type="entry name" value="AAA_assoc"/>
    <property type="match status" value="1"/>
</dbReference>
<dbReference type="SMART" id="SM00382">
    <property type="entry name" value="AAA"/>
    <property type="match status" value="1"/>
</dbReference>
<dbReference type="SUPFAM" id="SSF52540">
    <property type="entry name" value="P-loop containing nucleoside triphosphate hydrolases"/>
    <property type="match status" value="1"/>
</dbReference>
<dbReference type="PROSITE" id="PS00674">
    <property type="entry name" value="AAA"/>
    <property type="match status" value="1"/>
</dbReference>
<protein>
    <recommendedName>
        <fullName>AAA-ATPase At5g17750</fullName>
        <ecNumber evidence="1">3.6.1.-</ecNumber>
    </recommendedName>
</protein>
<organism evidence="6">
    <name type="scientific">Arabidopsis thaliana</name>
    <name type="common">Mouse-ear cress</name>
    <dbReference type="NCBI Taxonomy" id="3702"/>
    <lineage>
        <taxon>Eukaryota</taxon>
        <taxon>Viridiplantae</taxon>
        <taxon>Streptophyta</taxon>
        <taxon>Embryophyta</taxon>
        <taxon>Tracheophyta</taxon>
        <taxon>Spermatophyta</taxon>
        <taxon>Magnoliopsida</taxon>
        <taxon>eudicotyledons</taxon>
        <taxon>Gunneridae</taxon>
        <taxon>Pentapetalae</taxon>
        <taxon>rosids</taxon>
        <taxon>malvids</taxon>
        <taxon>Brassicales</taxon>
        <taxon>Brassicaceae</taxon>
        <taxon>Camelineae</taxon>
        <taxon>Arabidopsis</taxon>
    </lineage>
</organism>
<feature type="chain" id="PRO_0000434719" description="AAA-ATPase At5g17750">
    <location>
        <begin position="1"/>
        <end position="392"/>
    </location>
</feature>
<feature type="transmembrane region" description="Helical" evidence="2">
    <location>
        <begin position="13"/>
        <end position="35"/>
    </location>
</feature>
<feature type="binding site" evidence="2">
    <location>
        <begin position="227"/>
        <end position="234"/>
    </location>
    <ligand>
        <name>ATP</name>
        <dbReference type="ChEBI" id="CHEBI:30616"/>
    </ligand>
</feature>
<comment type="catalytic activity">
    <reaction evidence="1">
        <text>ATP + H2O = ADP + phosphate + H(+)</text>
        <dbReference type="Rhea" id="RHEA:13065"/>
        <dbReference type="ChEBI" id="CHEBI:15377"/>
        <dbReference type="ChEBI" id="CHEBI:15378"/>
        <dbReference type="ChEBI" id="CHEBI:30616"/>
        <dbReference type="ChEBI" id="CHEBI:43474"/>
        <dbReference type="ChEBI" id="CHEBI:456216"/>
    </reaction>
</comment>
<comment type="cofactor">
    <cofactor evidence="1">
        <name>Mg(2+)</name>
        <dbReference type="ChEBI" id="CHEBI:18420"/>
    </cofactor>
</comment>
<comment type="subcellular location">
    <subcellularLocation>
        <location evidence="2">Membrane</location>
        <topology evidence="2">Single-pass membrane protein</topology>
    </subcellularLocation>
</comment>
<comment type="similarity">
    <text evidence="3">Belongs to the AAA ATPase family. BCS1 subfamily.</text>
</comment>
<comment type="sequence caution" evidence="3">
    <conflict type="erroneous gene model prediction">
        <sequence resource="EMBL-CDS" id="BAB09574"/>
    </conflict>
</comment>
<gene>
    <name evidence="4" type="ordered locus">At5g17750</name>
    <name evidence="5" type="ORF">MVA3.11</name>
</gene>
<keyword id="KW-0067">ATP-binding</keyword>
<keyword id="KW-0378">Hydrolase</keyword>
<keyword id="KW-0460">Magnesium</keyword>
<keyword id="KW-0472">Membrane</keyword>
<keyword id="KW-0547">Nucleotide-binding</keyword>
<keyword id="KW-1185">Reference proteome</keyword>
<keyword id="KW-0812">Transmembrane</keyword>
<keyword id="KW-1133">Transmembrane helix</keyword>
<evidence type="ECO:0000250" key="1">
    <source>
        <dbReference type="UniProtKB" id="Q9FLD5"/>
    </source>
</evidence>
<evidence type="ECO:0000255" key="2"/>
<evidence type="ECO:0000305" key="3"/>
<evidence type="ECO:0000312" key="4">
    <source>
        <dbReference type="EMBL" id="AED92463.1"/>
    </source>
</evidence>
<evidence type="ECO:0000312" key="5">
    <source>
        <dbReference type="EMBL" id="BAB09574.1"/>
    </source>
</evidence>
<evidence type="ECO:0000312" key="6">
    <source>
        <dbReference type="Proteomes" id="UP000006548"/>
    </source>
</evidence>
<accession>F4KID5</accession>
<accession>Q9FN76</accession>
<proteinExistence type="inferred from homology"/>
<reference key="1">
    <citation type="journal article" date="1997" name="DNA Res.">
        <title>Structural analysis of Arabidopsis thaliana chromosome 5. II. Sequence features of the regions of 1,044,062 bp covered by thirteen physically assigned P1 clones.</title>
        <authorList>
            <person name="Kotani H."/>
            <person name="Nakamura Y."/>
            <person name="Sato S."/>
            <person name="Kaneko T."/>
            <person name="Asamizu E."/>
            <person name="Miyajima N."/>
            <person name="Tabata S."/>
        </authorList>
    </citation>
    <scope>NUCLEOTIDE SEQUENCE [LARGE SCALE GENOMIC DNA]</scope>
    <source>
        <strain>cv. Columbia</strain>
    </source>
</reference>
<reference key="2">
    <citation type="journal article" date="2017" name="Plant J.">
        <title>Araport11: a complete reannotation of the Arabidopsis thaliana reference genome.</title>
        <authorList>
            <person name="Cheng C.Y."/>
            <person name="Krishnakumar V."/>
            <person name="Chan A.P."/>
            <person name="Thibaud-Nissen F."/>
            <person name="Schobel S."/>
            <person name="Town C.D."/>
        </authorList>
    </citation>
    <scope>GENOME REANNOTATION</scope>
    <source>
        <strain>cv. Columbia</strain>
    </source>
</reference>